<evidence type="ECO:0000255" key="1">
    <source>
        <dbReference type="HAMAP-Rule" id="MF_01364"/>
    </source>
</evidence>
<evidence type="ECO:0000305" key="2"/>
<keyword id="KW-0479">Metal-binding</keyword>
<keyword id="KW-1185">Reference proteome</keyword>
<keyword id="KW-0687">Ribonucleoprotein</keyword>
<keyword id="KW-0689">Ribosomal protein</keyword>
<keyword id="KW-0694">RNA-binding</keyword>
<keyword id="KW-0699">rRNA-binding</keyword>
<keyword id="KW-0862">Zinc</keyword>
<name>RS14Z_KOSOT</name>
<organism>
    <name type="scientific">Kosmotoga olearia (strain ATCC BAA-1733 / DSM 21960 / TBF 19.5.1)</name>
    <dbReference type="NCBI Taxonomy" id="521045"/>
    <lineage>
        <taxon>Bacteria</taxon>
        <taxon>Thermotogati</taxon>
        <taxon>Thermotogota</taxon>
        <taxon>Thermotogae</taxon>
        <taxon>Kosmotogales</taxon>
        <taxon>Kosmotogaceae</taxon>
        <taxon>Kosmotoga</taxon>
    </lineage>
</organism>
<accession>C5CGI9</accession>
<feature type="chain" id="PRO_1000214914" description="Small ribosomal subunit protein uS14">
    <location>
        <begin position="1"/>
        <end position="61"/>
    </location>
</feature>
<feature type="binding site" evidence="1">
    <location>
        <position position="24"/>
    </location>
    <ligand>
        <name>Zn(2+)</name>
        <dbReference type="ChEBI" id="CHEBI:29105"/>
    </ligand>
</feature>
<feature type="binding site" evidence="1">
    <location>
        <position position="27"/>
    </location>
    <ligand>
        <name>Zn(2+)</name>
        <dbReference type="ChEBI" id="CHEBI:29105"/>
    </ligand>
</feature>
<feature type="binding site" evidence="1">
    <location>
        <position position="40"/>
    </location>
    <ligand>
        <name>Zn(2+)</name>
        <dbReference type="ChEBI" id="CHEBI:29105"/>
    </ligand>
</feature>
<feature type="binding site" evidence="1">
    <location>
        <position position="43"/>
    </location>
    <ligand>
        <name>Zn(2+)</name>
        <dbReference type="ChEBI" id="CHEBI:29105"/>
    </ligand>
</feature>
<sequence>MAKKSMVAKWKRGSKYKVRKYNRCHICGRPRAVYREFGLCRVCFRKLASEGKLPGVKKASW</sequence>
<comment type="function">
    <text evidence="1">Binds 16S rRNA, required for the assembly of 30S particles and may also be responsible for determining the conformation of the 16S rRNA at the A site.</text>
</comment>
<comment type="cofactor">
    <cofactor evidence="1">
        <name>Zn(2+)</name>
        <dbReference type="ChEBI" id="CHEBI:29105"/>
    </cofactor>
    <text evidence="1">Binds 1 zinc ion per subunit.</text>
</comment>
<comment type="subunit">
    <text evidence="1">Part of the 30S ribosomal subunit. Contacts proteins S3 and S10.</text>
</comment>
<comment type="similarity">
    <text evidence="1">Belongs to the universal ribosomal protein uS14 family. Zinc-binding uS14 subfamily.</text>
</comment>
<gene>
    <name evidence="1" type="primary">rpsZ</name>
    <name evidence="1" type="synonym">rpsN</name>
    <name type="ordered locus">Kole_1889</name>
</gene>
<reference key="1">
    <citation type="submission" date="2009-06" db="EMBL/GenBank/DDBJ databases">
        <title>Complete sequence of Thermotogales bacterium TBF 19.5.1.</title>
        <authorList>
            <consortium name="US DOE Joint Genome Institute"/>
            <person name="Lucas S."/>
            <person name="Copeland A."/>
            <person name="Lapidus A."/>
            <person name="Glavina del Rio T."/>
            <person name="Tice H."/>
            <person name="Bruce D."/>
            <person name="Goodwin L."/>
            <person name="Pitluck S."/>
            <person name="Chertkov O."/>
            <person name="Brettin T."/>
            <person name="Detter J.C."/>
            <person name="Han C."/>
            <person name="Schmutz J."/>
            <person name="Larimer F."/>
            <person name="Land M."/>
            <person name="Hauser L."/>
            <person name="Kyrpides N."/>
            <person name="Ovchinnikova G."/>
            <person name="Noll K."/>
        </authorList>
    </citation>
    <scope>NUCLEOTIDE SEQUENCE [LARGE SCALE GENOMIC DNA]</scope>
    <source>
        <strain>ATCC BAA-1733 / DSM 21960 / TBF 19.5.1</strain>
    </source>
</reference>
<protein>
    <recommendedName>
        <fullName evidence="1">Small ribosomal subunit protein uS14</fullName>
    </recommendedName>
    <alternativeName>
        <fullName evidence="2">30S ribosomal protein S14 type Z</fullName>
    </alternativeName>
</protein>
<proteinExistence type="inferred from homology"/>
<dbReference type="EMBL" id="CP001634">
    <property type="protein sequence ID" value="ACR80570.1"/>
    <property type="molecule type" value="Genomic_DNA"/>
</dbReference>
<dbReference type="RefSeq" id="WP_015869213.1">
    <property type="nucleotide sequence ID" value="NC_012785.1"/>
</dbReference>
<dbReference type="SMR" id="C5CGI9"/>
<dbReference type="STRING" id="521045.Kole_1889"/>
<dbReference type="KEGG" id="kol:Kole_1889"/>
<dbReference type="eggNOG" id="COG0199">
    <property type="taxonomic scope" value="Bacteria"/>
</dbReference>
<dbReference type="HOGENOM" id="CLU_139869_3_0_0"/>
<dbReference type="OrthoDB" id="9810484at2"/>
<dbReference type="Proteomes" id="UP000002382">
    <property type="component" value="Chromosome"/>
</dbReference>
<dbReference type="GO" id="GO:0005737">
    <property type="term" value="C:cytoplasm"/>
    <property type="evidence" value="ECO:0007669"/>
    <property type="project" value="UniProtKB-ARBA"/>
</dbReference>
<dbReference type="GO" id="GO:0015935">
    <property type="term" value="C:small ribosomal subunit"/>
    <property type="evidence" value="ECO:0007669"/>
    <property type="project" value="TreeGrafter"/>
</dbReference>
<dbReference type="GO" id="GO:0019843">
    <property type="term" value="F:rRNA binding"/>
    <property type="evidence" value="ECO:0007669"/>
    <property type="project" value="UniProtKB-UniRule"/>
</dbReference>
<dbReference type="GO" id="GO:0003735">
    <property type="term" value="F:structural constituent of ribosome"/>
    <property type="evidence" value="ECO:0007669"/>
    <property type="project" value="InterPro"/>
</dbReference>
<dbReference type="GO" id="GO:0008270">
    <property type="term" value="F:zinc ion binding"/>
    <property type="evidence" value="ECO:0007669"/>
    <property type="project" value="UniProtKB-UniRule"/>
</dbReference>
<dbReference type="GO" id="GO:0006412">
    <property type="term" value="P:translation"/>
    <property type="evidence" value="ECO:0007669"/>
    <property type="project" value="UniProtKB-UniRule"/>
</dbReference>
<dbReference type="FunFam" id="4.10.830.10:FF:000001">
    <property type="entry name" value="30S ribosomal protein S14 type Z"/>
    <property type="match status" value="1"/>
</dbReference>
<dbReference type="Gene3D" id="4.10.830.10">
    <property type="entry name" value="30s Ribosomal Protein S14, Chain N"/>
    <property type="match status" value="1"/>
</dbReference>
<dbReference type="HAMAP" id="MF_01364_B">
    <property type="entry name" value="Ribosomal_uS14_2_B"/>
    <property type="match status" value="1"/>
</dbReference>
<dbReference type="InterPro" id="IPR001209">
    <property type="entry name" value="Ribosomal_uS14"/>
</dbReference>
<dbReference type="InterPro" id="IPR023053">
    <property type="entry name" value="Ribosomal_uS14_bact"/>
</dbReference>
<dbReference type="InterPro" id="IPR018271">
    <property type="entry name" value="Ribosomal_uS14_CS"/>
</dbReference>
<dbReference type="InterPro" id="IPR043140">
    <property type="entry name" value="Ribosomal_uS14_sf"/>
</dbReference>
<dbReference type="NCBIfam" id="NF005974">
    <property type="entry name" value="PRK08061.1"/>
    <property type="match status" value="1"/>
</dbReference>
<dbReference type="PANTHER" id="PTHR19836">
    <property type="entry name" value="30S RIBOSOMAL PROTEIN S14"/>
    <property type="match status" value="1"/>
</dbReference>
<dbReference type="PANTHER" id="PTHR19836:SF19">
    <property type="entry name" value="SMALL RIBOSOMAL SUBUNIT PROTEIN US14M"/>
    <property type="match status" value="1"/>
</dbReference>
<dbReference type="Pfam" id="PF00253">
    <property type="entry name" value="Ribosomal_S14"/>
    <property type="match status" value="1"/>
</dbReference>
<dbReference type="SUPFAM" id="SSF57716">
    <property type="entry name" value="Glucocorticoid receptor-like (DNA-binding domain)"/>
    <property type="match status" value="1"/>
</dbReference>
<dbReference type="PROSITE" id="PS00527">
    <property type="entry name" value="RIBOSOMAL_S14"/>
    <property type="match status" value="1"/>
</dbReference>